<comment type="function">
    <text evidence="2">Cilium-specific protein required for cilia structures in Johnston's sensory organ. Plays a role in motility of cilia and flagella.</text>
</comment>
<comment type="subcellular location">
    <subcellularLocation>
        <location evidence="2">Cytoplasm</location>
    </subcellularLocation>
    <subcellularLocation>
        <location evidence="2">Cell projection</location>
        <location evidence="2">Dendrite</location>
    </subcellularLocation>
    <subcellularLocation>
        <location evidence="2">Cell projection</location>
        <location evidence="2">Cilium</location>
        <location evidence="2">Flagellum</location>
    </subcellularLocation>
    <text>Detected in the inner and outer dendritic segment and basal body.</text>
</comment>
<comment type="tissue specificity">
    <text evidence="2">Expressed in chordotonal sense organs, Johnston's organ and sperm (at protein level). Expressed in ciliated cells. Expressed in the head and testis.</text>
</comment>
<comment type="developmental stage">
    <text evidence="2">Expressed in ciliated cells of the chordotonal organs, neurons of Johnston's organ and femoral chordotonal organs, olfactory sensilla on the antenna in late stage embryos and larvae.</text>
</comment>
<comment type="disruption phenotype">
    <text evidence="2">Larvae mutants are insensitive to touch and have defects in larval locomotion. Adult mutants show defects in motility and coordination and are deaf; lack antenna oscillations and mechanical amplification of stimulus-induced antennal vibrations. Mutant males can mate but are sterile because of amotile sperm; tail axonemes lacked the inner dynein arms.</text>
</comment>
<comment type="similarity">
    <text evidence="3">Belongs to the tilB family.</text>
</comment>
<proteinExistence type="evidence at protein level"/>
<evidence type="ECO:0000255" key="1"/>
<evidence type="ECO:0000269" key="2">
    <source>
    </source>
</evidence>
<evidence type="ECO:0000305" key="3"/>
<keyword id="KW-0966">Cell projection</keyword>
<keyword id="KW-0969">Cilium</keyword>
<keyword id="KW-0175">Coiled coil</keyword>
<keyword id="KW-0963">Cytoplasm</keyword>
<keyword id="KW-0282">Flagellum</keyword>
<keyword id="KW-0433">Leucine-rich repeat</keyword>
<keyword id="KW-1185">Reference proteome</keyword>
<keyword id="KW-0677">Repeat</keyword>
<feature type="chain" id="PRO_0000414861" description="Protein tilB">
    <location>
        <begin position="1"/>
        <end position="395"/>
    </location>
</feature>
<feature type="repeat" description="LRR 1">
    <location>
        <begin position="20"/>
        <end position="44"/>
    </location>
</feature>
<feature type="repeat" description="LRR 2">
    <location>
        <begin position="46"/>
        <end position="65"/>
    </location>
</feature>
<feature type="repeat" description="LRR 3">
    <location>
        <begin position="66"/>
        <end position="89"/>
    </location>
</feature>
<feature type="repeat" description="LRR 4">
    <location>
        <begin position="90"/>
        <end position="110"/>
    </location>
</feature>
<feature type="domain" description="LRRCT">
    <location>
        <begin position="128"/>
        <end position="146"/>
    </location>
</feature>
<feature type="domain" description="CS">
    <location>
        <begin position="264"/>
        <end position="355"/>
    </location>
</feature>
<feature type="coiled-coil region" evidence="1">
    <location>
        <begin position="170"/>
        <end position="196"/>
    </location>
</feature>
<reference key="1">
    <citation type="journal article" date="2000" name="Science">
        <title>The genome sequence of Drosophila melanogaster.</title>
        <authorList>
            <person name="Adams M.D."/>
            <person name="Celniker S.E."/>
            <person name="Holt R.A."/>
            <person name="Evans C.A."/>
            <person name="Gocayne J.D."/>
            <person name="Amanatides P.G."/>
            <person name="Scherer S.E."/>
            <person name="Li P.W."/>
            <person name="Hoskins R.A."/>
            <person name="Galle R.F."/>
            <person name="George R.A."/>
            <person name="Lewis S.E."/>
            <person name="Richards S."/>
            <person name="Ashburner M."/>
            <person name="Henderson S.N."/>
            <person name="Sutton G.G."/>
            <person name="Wortman J.R."/>
            <person name="Yandell M.D."/>
            <person name="Zhang Q."/>
            <person name="Chen L.X."/>
            <person name="Brandon R.C."/>
            <person name="Rogers Y.-H.C."/>
            <person name="Blazej R.G."/>
            <person name="Champe M."/>
            <person name="Pfeiffer B.D."/>
            <person name="Wan K.H."/>
            <person name="Doyle C."/>
            <person name="Baxter E.G."/>
            <person name="Helt G."/>
            <person name="Nelson C.R."/>
            <person name="Miklos G.L.G."/>
            <person name="Abril J.F."/>
            <person name="Agbayani A."/>
            <person name="An H.-J."/>
            <person name="Andrews-Pfannkoch C."/>
            <person name="Baldwin D."/>
            <person name="Ballew R.M."/>
            <person name="Basu A."/>
            <person name="Baxendale J."/>
            <person name="Bayraktaroglu L."/>
            <person name="Beasley E.M."/>
            <person name="Beeson K.Y."/>
            <person name="Benos P.V."/>
            <person name="Berman B.P."/>
            <person name="Bhandari D."/>
            <person name="Bolshakov S."/>
            <person name="Borkova D."/>
            <person name="Botchan M.R."/>
            <person name="Bouck J."/>
            <person name="Brokstein P."/>
            <person name="Brottier P."/>
            <person name="Burtis K.C."/>
            <person name="Busam D.A."/>
            <person name="Butler H."/>
            <person name="Cadieu E."/>
            <person name="Center A."/>
            <person name="Chandra I."/>
            <person name="Cherry J.M."/>
            <person name="Cawley S."/>
            <person name="Dahlke C."/>
            <person name="Davenport L.B."/>
            <person name="Davies P."/>
            <person name="de Pablos B."/>
            <person name="Delcher A."/>
            <person name="Deng Z."/>
            <person name="Mays A.D."/>
            <person name="Dew I."/>
            <person name="Dietz S.M."/>
            <person name="Dodson K."/>
            <person name="Doup L.E."/>
            <person name="Downes M."/>
            <person name="Dugan-Rocha S."/>
            <person name="Dunkov B.C."/>
            <person name="Dunn P."/>
            <person name="Durbin K.J."/>
            <person name="Evangelista C.C."/>
            <person name="Ferraz C."/>
            <person name="Ferriera S."/>
            <person name="Fleischmann W."/>
            <person name="Fosler C."/>
            <person name="Gabrielian A.E."/>
            <person name="Garg N.S."/>
            <person name="Gelbart W.M."/>
            <person name="Glasser K."/>
            <person name="Glodek A."/>
            <person name="Gong F."/>
            <person name="Gorrell J.H."/>
            <person name="Gu Z."/>
            <person name="Guan P."/>
            <person name="Harris M."/>
            <person name="Harris N.L."/>
            <person name="Harvey D.A."/>
            <person name="Heiman T.J."/>
            <person name="Hernandez J.R."/>
            <person name="Houck J."/>
            <person name="Hostin D."/>
            <person name="Houston K.A."/>
            <person name="Howland T.J."/>
            <person name="Wei M.-H."/>
            <person name="Ibegwam C."/>
            <person name="Jalali M."/>
            <person name="Kalush F."/>
            <person name="Karpen G.H."/>
            <person name="Ke Z."/>
            <person name="Kennison J.A."/>
            <person name="Ketchum K.A."/>
            <person name="Kimmel B.E."/>
            <person name="Kodira C.D."/>
            <person name="Kraft C.L."/>
            <person name="Kravitz S."/>
            <person name="Kulp D."/>
            <person name="Lai Z."/>
            <person name="Lasko P."/>
            <person name="Lei Y."/>
            <person name="Levitsky A.A."/>
            <person name="Li J.H."/>
            <person name="Li Z."/>
            <person name="Liang Y."/>
            <person name="Lin X."/>
            <person name="Liu X."/>
            <person name="Mattei B."/>
            <person name="McIntosh T.C."/>
            <person name="McLeod M.P."/>
            <person name="McPherson D."/>
            <person name="Merkulov G."/>
            <person name="Milshina N.V."/>
            <person name="Mobarry C."/>
            <person name="Morris J."/>
            <person name="Moshrefi A."/>
            <person name="Mount S.M."/>
            <person name="Moy M."/>
            <person name="Murphy B."/>
            <person name="Murphy L."/>
            <person name="Muzny D.M."/>
            <person name="Nelson D.L."/>
            <person name="Nelson D.R."/>
            <person name="Nelson K.A."/>
            <person name="Nixon K."/>
            <person name="Nusskern D.R."/>
            <person name="Pacleb J.M."/>
            <person name="Palazzolo M."/>
            <person name="Pittman G.S."/>
            <person name="Pan S."/>
            <person name="Pollard J."/>
            <person name="Puri V."/>
            <person name="Reese M.G."/>
            <person name="Reinert K."/>
            <person name="Remington K."/>
            <person name="Saunders R.D.C."/>
            <person name="Scheeler F."/>
            <person name="Shen H."/>
            <person name="Shue B.C."/>
            <person name="Siden-Kiamos I."/>
            <person name="Simpson M."/>
            <person name="Skupski M.P."/>
            <person name="Smith T.J."/>
            <person name="Spier E."/>
            <person name="Spradling A.C."/>
            <person name="Stapleton M."/>
            <person name="Strong R."/>
            <person name="Sun E."/>
            <person name="Svirskas R."/>
            <person name="Tector C."/>
            <person name="Turner R."/>
            <person name="Venter E."/>
            <person name="Wang A.H."/>
            <person name="Wang X."/>
            <person name="Wang Z.-Y."/>
            <person name="Wassarman D.A."/>
            <person name="Weinstock G.M."/>
            <person name="Weissenbach J."/>
            <person name="Williams S.M."/>
            <person name="Woodage T."/>
            <person name="Worley K.C."/>
            <person name="Wu D."/>
            <person name="Yang S."/>
            <person name="Yao Q.A."/>
            <person name="Ye J."/>
            <person name="Yeh R.-F."/>
            <person name="Zaveri J.S."/>
            <person name="Zhan M."/>
            <person name="Zhang G."/>
            <person name="Zhao Q."/>
            <person name="Zheng L."/>
            <person name="Zheng X.H."/>
            <person name="Zhong F.N."/>
            <person name="Zhong W."/>
            <person name="Zhou X."/>
            <person name="Zhu S.C."/>
            <person name="Zhu X."/>
            <person name="Smith H.O."/>
            <person name="Gibbs R.A."/>
            <person name="Myers E.W."/>
            <person name="Rubin G.M."/>
            <person name="Venter J.C."/>
        </authorList>
    </citation>
    <scope>NUCLEOTIDE SEQUENCE [LARGE SCALE GENOMIC DNA]</scope>
    <source>
        <strain>Berkeley</strain>
    </source>
</reference>
<reference key="2">
    <citation type="journal article" date="2002" name="Genome Biol.">
        <title>Annotation of the Drosophila melanogaster euchromatic genome: a systematic review.</title>
        <authorList>
            <person name="Misra S."/>
            <person name="Crosby M.A."/>
            <person name="Mungall C.J."/>
            <person name="Matthews B.B."/>
            <person name="Campbell K.S."/>
            <person name="Hradecky P."/>
            <person name="Huang Y."/>
            <person name="Kaminker J.S."/>
            <person name="Millburn G.H."/>
            <person name="Prochnik S.E."/>
            <person name="Smith C.D."/>
            <person name="Tupy J.L."/>
            <person name="Whitfield E.J."/>
            <person name="Bayraktaroglu L."/>
            <person name="Berman B.P."/>
            <person name="Bettencourt B.R."/>
            <person name="Celniker S.E."/>
            <person name="de Grey A.D.N.J."/>
            <person name="Drysdale R.A."/>
            <person name="Harris N.L."/>
            <person name="Richter J."/>
            <person name="Russo S."/>
            <person name="Schroeder A.J."/>
            <person name="Shu S.Q."/>
            <person name="Stapleton M."/>
            <person name="Yamada C."/>
            <person name="Ashburner M."/>
            <person name="Gelbart W.M."/>
            <person name="Rubin G.M."/>
            <person name="Lewis S.E."/>
        </authorList>
    </citation>
    <scope>GENOME REANNOTATION</scope>
    <source>
        <strain>Berkeley</strain>
    </source>
</reference>
<reference key="3">
    <citation type="journal article" date="2010" name="Genetics">
        <title>Hearing in Drosophila requires TilB, a conserved protein associated with ciliary motility.</title>
        <authorList>
            <person name="Kavlie R.G."/>
            <person name="Kernan M.J."/>
            <person name="Eberl D.F."/>
        </authorList>
    </citation>
    <scope>FUNCTION</scope>
    <scope>SUBCELLULAR LOCATION</scope>
    <scope>TISSUE SPECIFICITY</scope>
    <scope>DEVELOPMENTAL STAGE</scope>
    <scope>DISRUPTION PHENOTYPE</scope>
</reference>
<name>TILB_DROME</name>
<sequence>MVLITEELVRKKSEHNERLISTLEEISLHQEDIEVIEHIQNWCRDLKILLLQSNLIARLENLHKLKRLEYLNVAINNIERVENLEGCESLSKLDLTLNFIRELTSVESLCGNYNLRELVLIGNPCVDYPHYRDYVVATLPQLNSLDCVEITPSERLRALRELSKNRSIIVQKQVEQDIERDEQRIRVAKQQSALAEHCAGIEDEEERIKAFWQAKSEHCPEIRTEIARQHRLGRERHETKSPLDPLKPQRNLFAPCGRPYNLNQAKLPFKFRDEADHYLLQLEVYRHLDTSLIDVDVQTTYTRVTVKKKIFQIAYSEEVKPDESTVQRSQITGHLVVNLKKLKVNELLIAKKSPTKSPAAPFDAGKKDGKPEEAFHGGVVDISNICAPEDLPDLI</sequence>
<dbReference type="EMBL" id="AE014298">
    <property type="protein sequence ID" value="AAF50954.1"/>
    <property type="molecule type" value="Genomic_DNA"/>
</dbReference>
<dbReference type="RefSeq" id="NP_608460.1">
    <property type="nucleotide sequence ID" value="NM_134616.3"/>
</dbReference>
<dbReference type="SMR" id="Q9VR52"/>
<dbReference type="BioGRID" id="59404">
    <property type="interactions" value="2"/>
</dbReference>
<dbReference type="FunCoup" id="Q9VR52">
    <property type="interactions" value="13"/>
</dbReference>
<dbReference type="IntAct" id="Q9VR52">
    <property type="interactions" value="2"/>
</dbReference>
<dbReference type="STRING" id="7227.FBpp0077037"/>
<dbReference type="PaxDb" id="7227-FBpp0077037"/>
<dbReference type="EnsemblMetazoa" id="FBtr0077345">
    <property type="protein sequence ID" value="FBpp0077037"/>
    <property type="gene ID" value="FBgn0014395"/>
</dbReference>
<dbReference type="GeneID" id="33130"/>
<dbReference type="KEGG" id="dme:Dmel_CG14620"/>
<dbReference type="UCSC" id="CG14620-RA">
    <property type="organism name" value="d. melanogaster"/>
</dbReference>
<dbReference type="AGR" id="FB:FBgn0014395"/>
<dbReference type="CTD" id="33130"/>
<dbReference type="FlyBase" id="FBgn0014395">
    <property type="gene designation" value="tilB"/>
</dbReference>
<dbReference type="VEuPathDB" id="VectorBase:FBgn0014395"/>
<dbReference type="eggNOG" id="KOG0531">
    <property type="taxonomic scope" value="Eukaryota"/>
</dbReference>
<dbReference type="GeneTree" id="ENSGT00940000158506"/>
<dbReference type="HOGENOM" id="CLU_034806_0_1_1"/>
<dbReference type="InParanoid" id="Q9VR52"/>
<dbReference type="OMA" id="QHRAVIV"/>
<dbReference type="OrthoDB" id="10250990at2759"/>
<dbReference type="PhylomeDB" id="Q9VR52"/>
<dbReference type="BioGRID-ORCS" id="33130">
    <property type="hits" value="0 hits in 3 CRISPR screens"/>
</dbReference>
<dbReference type="GenomeRNAi" id="33130"/>
<dbReference type="PRO" id="PR:Q9VR52"/>
<dbReference type="Proteomes" id="UP000000803">
    <property type="component" value="Chromosome X"/>
</dbReference>
<dbReference type="Bgee" id="FBgn0014395">
    <property type="expression patterns" value="Expressed in early elongation stage spermatid (Drosophila) in testis and 20 other cell types or tissues"/>
</dbReference>
<dbReference type="ExpressionAtlas" id="Q9VR52">
    <property type="expression patterns" value="baseline and differential"/>
</dbReference>
<dbReference type="GO" id="GO:0005737">
    <property type="term" value="C:cytoplasm"/>
    <property type="evidence" value="ECO:0000314"/>
    <property type="project" value="FlyBase"/>
</dbReference>
<dbReference type="GO" id="GO:0030425">
    <property type="term" value="C:dendrite"/>
    <property type="evidence" value="ECO:0000314"/>
    <property type="project" value="UniProtKB"/>
</dbReference>
<dbReference type="GO" id="GO:0031514">
    <property type="term" value="C:motile cilium"/>
    <property type="evidence" value="ECO:0000314"/>
    <property type="project" value="UniProtKB"/>
</dbReference>
<dbReference type="GO" id="GO:0035082">
    <property type="term" value="P:axoneme assembly"/>
    <property type="evidence" value="ECO:0000315"/>
    <property type="project" value="FlyBase"/>
</dbReference>
<dbReference type="GO" id="GO:0060285">
    <property type="term" value="P:cilium-dependent cell motility"/>
    <property type="evidence" value="ECO:0000315"/>
    <property type="project" value="UniProtKB"/>
</dbReference>
<dbReference type="GO" id="GO:0045433">
    <property type="term" value="P:male courtship behavior, veined wing generated song production"/>
    <property type="evidence" value="ECO:0000315"/>
    <property type="project" value="FlyBase"/>
</dbReference>
<dbReference type="GO" id="GO:0036158">
    <property type="term" value="P:outer dynein arm assembly"/>
    <property type="evidence" value="ECO:0000318"/>
    <property type="project" value="GO_Central"/>
</dbReference>
<dbReference type="GO" id="GO:0007605">
    <property type="term" value="P:sensory perception of sound"/>
    <property type="evidence" value="ECO:0000315"/>
    <property type="project" value="FlyBase"/>
</dbReference>
<dbReference type="GO" id="GO:0010378">
    <property type="term" value="P:temperature compensation of the circadian clock"/>
    <property type="evidence" value="ECO:0000315"/>
    <property type="project" value="FlyBase"/>
</dbReference>
<dbReference type="FunFam" id="3.80.10.10:FF:000052">
    <property type="entry name" value="Leucine rich repeat containing 6"/>
    <property type="match status" value="1"/>
</dbReference>
<dbReference type="Gene3D" id="3.80.10.10">
    <property type="entry name" value="Ribonuclease Inhibitor"/>
    <property type="match status" value="1"/>
</dbReference>
<dbReference type="InterPro" id="IPR056496">
    <property type="entry name" value="CS_DNAAF11_C"/>
</dbReference>
<dbReference type="InterPro" id="IPR001611">
    <property type="entry name" value="Leu-rich_rpt"/>
</dbReference>
<dbReference type="InterPro" id="IPR032675">
    <property type="entry name" value="LRR_dom_sf"/>
</dbReference>
<dbReference type="PANTHER" id="PTHR18849:SF0">
    <property type="entry name" value="CILIA- AND FLAGELLA-ASSOCIATED PROTEIN 410-RELATED"/>
    <property type="match status" value="1"/>
</dbReference>
<dbReference type="PANTHER" id="PTHR18849">
    <property type="entry name" value="LEUCINE RICH REPEAT PROTEIN"/>
    <property type="match status" value="1"/>
</dbReference>
<dbReference type="Pfam" id="PF23602">
    <property type="entry name" value="CS_DNAAF11_C"/>
    <property type="match status" value="1"/>
</dbReference>
<dbReference type="Pfam" id="PF14580">
    <property type="entry name" value="LRR_9"/>
    <property type="match status" value="1"/>
</dbReference>
<dbReference type="SMART" id="SM00365">
    <property type="entry name" value="LRR_SD22"/>
    <property type="match status" value="2"/>
</dbReference>
<dbReference type="SUPFAM" id="SSF52058">
    <property type="entry name" value="L domain-like"/>
    <property type="match status" value="1"/>
</dbReference>
<dbReference type="PROSITE" id="PS51450">
    <property type="entry name" value="LRR"/>
    <property type="match status" value="5"/>
</dbReference>
<organism>
    <name type="scientific">Drosophila melanogaster</name>
    <name type="common">Fruit fly</name>
    <dbReference type="NCBI Taxonomy" id="7227"/>
    <lineage>
        <taxon>Eukaryota</taxon>
        <taxon>Metazoa</taxon>
        <taxon>Ecdysozoa</taxon>
        <taxon>Arthropoda</taxon>
        <taxon>Hexapoda</taxon>
        <taxon>Insecta</taxon>
        <taxon>Pterygota</taxon>
        <taxon>Neoptera</taxon>
        <taxon>Endopterygota</taxon>
        <taxon>Diptera</taxon>
        <taxon>Brachycera</taxon>
        <taxon>Muscomorpha</taxon>
        <taxon>Ephydroidea</taxon>
        <taxon>Drosophilidae</taxon>
        <taxon>Drosophila</taxon>
        <taxon>Sophophora</taxon>
    </lineage>
</organism>
<protein>
    <recommendedName>
        <fullName>Protein tilB</fullName>
    </recommendedName>
    <alternativeName>
        <fullName>Touch insensitive larva B protein</fullName>
    </alternativeName>
</protein>
<accession>Q9VR52</accession>
<gene>
    <name type="primary">tilB</name>
    <name type="ORF">CG14620</name>
</gene>